<feature type="chain" id="PRO_0000255596" description="GPN-loop GTPase 3">
    <location>
        <begin position="1"/>
        <end position="271"/>
    </location>
</feature>
<feature type="short sequence motif" description="Gly-Pro-Asn (GPN)-loop; involved in dimer interface" evidence="2">
    <location>
        <begin position="70"/>
        <end position="72"/>
    </location>
</feature>
<feature type="binding site" evidence="2">
    <location>
        <begin position="13"/>
        <end position="18"/>
    </location>
    <ligand>
        <name>GTP</name>
        <dbReference type="ChEBI" id="CHEBI:37565"/>
    </ligand>
</feature>
<feature type="binding site" evidence="2">
    <location>
        <begin position="173"/>
        <end position="176"/>
    </location>
    <ligand>
        <name>GTP</name>
        <dbReference type="ChEBI" id="CHEBI:37565"/>
    </ligand>
</feature>
<feature type="site" description="Stabilizes the phosphate intermediate; shared with dimeric partner" evidence="2">
    <location>
        <position position="72"/>
    </location>
</feature>
<evidence type="ECO:0000250" key="1">
    <source>
        <dbReference type="UniProtKB" id="Q06543"/>
    </source>
</evidence>
<evidence type="ECO:0000250" key="2">
    <source>
        <dbReference type="UniProtKB" id="Q9UYR9"/>
    </source>
</evidence>
<evidence type="ECO:0000305" key="3"/>
<dbReference type="EMBL" id="CR382129">
    <property type="protein sequence ID" value="CAG82367.1"/>
    <property type="molecule type" value="Genomic_DNA"/>
</dbReference>
<dbReference type="RefSeq" id="XP_502047.1">
    <property type="nucleotide sequence ID" value="XM_502047.1"/>
</dbReference>
<dbReference type="SMR" id="Q6CBB5"/>
<dbReference type="FunCoup" id="Q6CBB5">
    <property type="interactions" value="928"/>
</dbReference>
<dbReference type="STRING" id="284591.Q6CBB5"/>
<dbReference type="EnsemblFungi" id="CAG82367">
    <property type="protein sequence ID" value="CAG82367"/>
    <property type="gene ID" value="YALI0_C20317g"/>
</dbReference>
<dbReference type="KEGG" id="yli:2909877"/>
<dbReference type="VEuPathDB" id="FungiDB:YALI0_C20317g"/>
<dbReference type="HOGENOM" id="CLU_037460_0_0_1"/>
<dbReference type="InParanoid" id="Q6CBB5"/>
<dbReference type="OMA" id="LYTHMTV"/>
<dbReference type="OrthoDB" id="17903at4891"/>
<dbReference type="Proteomes" id="UP000001300">
    <property type="component" value="Chromosome C"/>
</dbReference>
<dbReference type="GO" id="GO:0005525">
    <property type="term" value="F:GTP binding"/>
    <property type="evidence" value="ECO:0007669"/>
    <property type="project" value="UniProtKB-KW"/>
</dbReference>
<dbReference type="GO" id="GO:0003924">
    <property type="term" value="F:GTPase activity"/>
    <property type="evidence" value="ECO:0000318"/>
    <property type="project" value="GO_Central"/>
</dbReference>
<dbReference type="CDD" id="cd17872">
    <property type="entry name" value="GPN3"/>
    <property type="match status" value="1"/>
</dbReference>
<dbReference type="FunFam" id="3.40.50.300:FF:000552">
    <property type="entry name" value="GPN-loop GTPase 3"/>
    <property type="match status" value="1"/>
</dbReference>
<dbReference type="Gene3D" id="3.40.50.300">
    <property type="entry name" value="P-loop containing nucleotide triphosphate hydrolases"/>
    <property type="match status" value="1"/>
</dbReference>
<dbReference type="InterPro" id="IPR004130">
    <property type="entry name" value="Gpn"/>
</dbReference>
<dbReference type="InterPro" id="IPR030228">
    <property type="entry name" value="Gpn3"/>
</dbReference>
<dbReference type="InterPro" id="IPR027417">
    <property type="entry name" value="P-loop_NTPase"/>
</dbReference>
<dbReference type="PANTHER" id="PTHR21231:SF7">
    <property type="entry name" value="GPN-LOOP GTPASE 3"/>
    <property type="match status" value="1"/>
</dbReference>
<dbReference type="PANTHER" id="PTHR21231">
    <property type="entry name" value="XPA-BINDING PROTEIN 1-RELATED"/>
    <property type="match status" value="1"/>
</dbReference>
<dbReference type="Pfam" id="PF03029">
    <property type="entry name" value="ATP_bind_1"/>
    <property type="match status" value="1"/>
</dbReference>
<dbReference type="SUPFAM" id="SSF52540">
    <property type="entry name" value="P-loop containing nucleoside triphosphate hydrolases"/>
    <property type="match status" value="1"/>
</dbReference>
<name>GPN3_YARLI</name>
<organism>
    <name type="scientific">Yarrowia lipolytica (strain CLIB 122 / E 150)</name>
    <name type="common">Yeast</name>
    <name type="synonym">Candida lipolytica</name>
    <dbReference type="NCBI Taxonomy" id="284591"/>
    <lineage>
        <taxon>Eukaryota</taxon>
        <taxon>Fungi</taxon>
        <taxon>Dikarya</taxon>
        <taxon>Ascomycota</taxon>
        <taxon>Saccharomycotina</taxon>
        <taxon>Dipodascomycetes</taxon>
        <taxon>Dipodascales</taxon>
        <taxon>Dipodascales incertae sedis</taxon>
        <taxon>Yarrowia</taxon>
    </lineage>
</organism>
<reference key="1">
    <citation type="journal article" date="2004" name="Nature">
        <title>Genome evolution in yeasts.</title>
        <authorList>
            <person name="Dujon B."/>
            <person name="Sherman D."/>
            <person name="Fischer G."/>
            <person name="Durrens P."/>
            <person name="Casaregola S."/>
            <person name="Lafontaine I."/>
            <person name="de Montigny J."/>
            <person name="Marck C."/>
            <person name="Neuveglise C."/>
            <person name="Talla E."/>
            <person name="Goffard N."/>
            <person name="Frangeul L."/>
            <person name="Aigle M."/>
            <person name="Anthouard V."/>
            <person name="Babour A."/>
            <person name="Barbe V."/>
            <person name="Barnay S."/>
            <person name="Blanchin S."/>
            <person name="Beckerich J.-M."/>
            <person name="Beyne E."/>
            <person name="Bleykasten C."/>
            <person name="Boisrame A."/>
            <person name="Boyer J."/>
            <person name="Cattolico L."/>
            <person name="Confanioleri F."/>
            <person name="de Daruvar A."/>
            <person name="Despons L."/>
            <person name="Fabre E."/>
            <person name="Fairhead C."/>
            <person name="Ferry-Dumazet H."/>
            <person name="Groppi A."/>
            <person name="Hantraye F."/>
            <person name="Hennequin C."/>
            <person name="Jauniaux N."/>
            <person name="Joyet P."/>
            <person name="Kachouri R."/>
            <person name="Kerrest A."/>
            <person name="Koszul R."/>
            <person name="Lemaire M."/>
            <person name="Lesur I."/>
            <person name="Ma L."/>
            <person name="Muller H."/>
            <person name="Nicaud J.-M."/>
            <person name="Nikolski M."/>
            <person name="Oztas S."/>
            <person name="Ozier-Kalogeropoulos O."/>
            <person name="Pellenz S."/>
            <person name="Potier S."/>
            <person name="Richard G.-F."/>
            <person name="Straub M.-L."/>
            <person name="Suleau A."/>
            <person name="Swennen D."/>
            <person name="Tekaia F."/>
            <person name="Wesolowski-Louvel M."/>
            <person name="Westhof E."/>
            <person name="Wirth B."/>
            <person name="Zeniou-Meyer M."/>
            <person name="Zivanovic Y."/>
            <person name="Bolotin-Fukuhara M."/>
            <person name="Thierry A."/>
            <person name="Bouchier C."/>
            <person name="Caudron B."/>
            <person name="Scarpelli C."/>
            <person name="Gaillardin C."/>
            <person name="Weissenbach J."/>
            <person name="Wincker P."/>
            <person name="Souciet J.-L."/>
        </authorList>
    </citation>
    <scope>NUCLEOTIDE SEQUENCE [LARGE SCALE GENOMIC DNA]</scope>
    <source>
        <strain>CLIB 122 / E 150</strain>
    </source>
</reference>
<gene>
    <name type="ordered locus">YALI0C20317g</name>
</gene>
<keyword id="KW-0342">GTP-binding</keyword>
<keyword id="KW-0378">Hydrolase</keyword>
<keyword id="KW-0547">Nucleotide-binding</keyword>
<keyword id="KW-1185">Reference proteome</keyword>
<comment type="function">
    <text evidence="1">Small GTPase required for proper nuclear import of RNA polymerase II and III (RNAPII and RNAPIII). May act at an RNAP assembly step prior to nuclear import.</text>
</comment>
<comment type="subunit">
    <text evidence="1">Heterodimers with GPN1 or GPN2. Binds to RNA polymerase II (RNAPII).</text>
</comment>
<comment type="similarity">
    <text evidence="3">Belongs to the GPN-loop GTPase family.</text>
</comment>
<accession>Q6CBB5</accession>
<sequence>MSRVGILVLGPAGVGKSTFCNALITHIQSIGRRAHIVNLDPAAEPNEYEFTVDIRDLISLNDVMEEMELGPNGGLMYCFEFLLQNMDWLEEELGEFEDEYLIFDCPGQIELYTHVPVLPTIVKHLQRHMGFSLCACYILEAPFVLDRPKFFSGVLSAMSAMILLETPHINILSKMDLIKDEVPKRELKRFLNPDPLLMVDEANSQTNPKFHQLNLAITNMIEDFGMVQFLPLEAKNPDSVAAILSYLDDVTQWADNQEPKEPKVEEVEEEE</sequence>
<proteinExistence type="inferred from homology"/>
<protein>
    <recommendedName>
        <fullName evidence="1">GPN-loop GTPase 3</fullName>
    </recommendedName>
</protein>